<evidence type="ECO:0000255" key="1">
    <source>
        <dbReference type="HAMAP-Rule" id="MF_00238"/>
    </source>
</evidence>
<accession>Q57FY7</accession>
<dbReference type="EC" id="2.7.4.25" evidence="1"/>
<dbReference type="EMBL" id="AE017223">
    <property type="protein sequence ID" value="AAX73447.1"/>
    <property type="molecule type" value="Genomic_DNA"/>
</dbReference>
<dbReference type="RefSeq" id="WP_002965273.1">
    <property type="nucleotide sequence ID" value="NC_006932.1"/>
</dbReference>
<dbReference type="SMR" id="Q57FY7"/>
<dbReference type="EnsemblBacteria" id="AAX73447">
    <property type="protein sequence ID" value="AAX73447"/>
    <property type="gene ID" value="BruAb1_0026"/>
</dbReference>
<dbReference type="GeneID" id="93017490"/>
<dbReference type="KEGG" id="bmb:BruAb1_0026"/>
<dbReference type="HOGENOM" id="CLU_079959_0_1_5"/>
<dbReference type="Proteomes" id="UP000000540">
    <property type="component" value="Chromosome I"/>
</dbReference>
<dbReference type="GO" id="GO:0005737">
    <property type="term" value="C:cytoplasm"/>
    <property type="evidence" value="ECO:0007669"/>
    <property type="project" value="UniProtKB-SubCell"/>
</dbReference>
<dbReference type="GO" id="GO:0005524">
    <property type="term" value="F:ATP binding"/>
    <property type="evidence" value="ECO:0007669"/>
    <property type="project" value="UniProtKB-UniRule"/>
</dbReference>
<dbReference type="GO" id="GO:0036430">
    <property type="term" value="F:CMP kinase activity"/>
    <property type="evidence" value="ECO:0007669"/>
    <property type="project" value="RHEA"/>
</dbReference>
<dbReference type="GO" id="GO:0036431">
    <property type="term" value="F:dCMP kinase activity"/>
    <property type="evidence" value="ECO:0007669"/>
    <property type="project" value="RHEA"/>
</dbReference>
<dbReference type="GO" id="GO:0006220">
    <property type="term" value="P:pyrimidine nucleotide metabolic process"/>
    <property type="evidence" value="ECO:0007669"/>
    <property type="project" value="UniProtKB-UniRule"/>
</dbReference>
<dbReference type="CDD" id="cd02020">
    <property type="entry name" value="CMPK"/>
    <property type="match status" value="1"/>
</dbReference>
<dbReference type="Gene3D" id="3.40.50.300">
    <property type="entry name" value="P-loop containing nucleotide triphosphate hydrolases"/>
    <property type="match status" value="1"/>
</dbReference>
<dbReference type="HAMAP" id="MF_00238">
    <property type="entry name" value="Cytidyl_kinase_type1"/>
    <property type="match status" value="1"/>
</dbReference>
<dbReference type="InterPro" id="IPR003136">
    <property type="entry name" value="Cytidylate_kin"/>
</dbReference>
<dbReference type="InterPro" id="IPR011994">
    <property type="entry name" value="Cytidylate_kinase_dom"/>
</dbReference>
<dbReference type="InterPro" id="IPR027417">
    <property type="entry name" value="P-loop_NTPase"/>
</dbReference>
<dbReference type="NCBIfam" id="TIGR00017">
    <property type="entry name" value="cmk"/>
    <property type="match status" value="1"/>
</dbReference>
<dbReference type="Pfam" id="PF02224">
    <property type="entry name" value="Cytidylate_kin"/>
    <property type="match status" value="1"/>
</dbReference>
<dbReference type="SUPFAM" id="SSF52540">
    <property type="entry name" value="P-loop containing nucleoside triphosphate hydrolases"/>
    <property type="match status" value="1"/>
</dbReference>
<keyword id="KW-0067">ATP-binding</keyword>
<keyword id="KW-0963">Cytoplasm</keyword>
<keyword id="KW-0418">Kinase</keyword>
<keyword id="KW-0547">Nucleotide-binding</keyword>
<keyword id="KW-0808">Transferase</keyword>
<name>KCY_BRUAB</name>
<sequence>MKSFVVAPFIVAIDGPAASGKGTLARRIATHYGMPHLDTGLTYRAVAKALLDKGLPLDDEALATDAALSLDLLAMDKAVLSAHAIGEAASKVAVMPAVRRALVEAQRHFANALPSSVLDGRDIGTVVCPDAAIKLFVTASPEVRARRRFDEVLARGDTADFAEILADLKKRDERDMNRTDSPLRPAEDAHLLDASEMSIEAAFLAAKKLIDHALAQHRG</sequence>
<protein>
    <recommendedName>
        <fullName evidence="1">Cytidylate kinase</fullName>
        <shortName evidence="1">CK</shortName>
        <ecNumber evidence="1">2.7.4.25</ecNumber>
    </recommendedName>
    <alternativeName>
        <fullName evidence="1">Cytidine monophosphate kinase</fullName>
        <shortName evidence="1">CMP kinase</shortName>
    </alternativeName>
</protein>
<comment type="catalytic activity">
    <reaction evidence="1">
        <text>CMP + ATP = CDP + ADP</text>
        <dbReference type="Rhea" id="RHEA:11600"/>
        <dbReference type="ChEBI" id="CHEBI:30616"/>
        <dbReference type="ChEBI" id="CHEBI:58069"/>
        <dbReference type="ChEBI" id="CHEBI:60377"/>
        <dbReference type="ChEBI" id="CHEBI:456216"/>
        <dbReference type="EC" id="2.7.4.25"/>
    </reaction>
</comment>
<comment type="catalytic activity">
    <reaction evidence="1">
        <text>dCMP + ATP = dCDP + ADP</text>
        <dbReference type="Rhea" id="RHEA:25094"/>
        <dbReference type="ChEBI" id="CHEBI:30616"/>
        <dbReference type="ChEBI" id="CHEBI:57566"/>
        <dbReference type="ChEBI" id="CHEBI:58593"/>
        <dbReference type="ChEBI" id="CHEBI:456216"/>
        <dbReference type="EC" id="2.7.4.25"/>
    </reaction>
</comment>
<comment type="subcellular location">
    <subcellularLocation>
        <location evidence="1">Cytoplasm</location>
    </subcellularLocation>
</comment>
<comment type="similarity">
    <text evidence="1">Belongs to the cytidylate kinase family. Type 1 subfamily.</text>
</comment>
<feature type="chain" id="PRO_1000048191" description="Cytidylate kinase">
    <location>
        <begin position="1"/>
        <end position="219"/>
    </location>
</feature>
<feature type="binding site" evidence="1">
    <location>
        <begin position="15"/>
        <end position="23"/>
    </location>
    <ligand>
        <name>ATP</name>
        <dbReference type="ChEBI" id="CHEBI:30616"/>
    </ligand>
</feature>
<proteinExistence type="inferred from homology"/>
<reference key="1">
    <citation type="journal article" date="2005" name="J. Bacteriol.">
        <title>Completion of the genome sequence of Brucella abortus and comparison to the highly similar genomes of Brucella melitensis and Brucella suis.</title>
        <authorList>
            <person name="Halling S.M."/>
            <person name="Peterson-Burch B.D."/>
            <person name="Bricker B.J."/>
            <person name="Zuerner R.L."/>
            <person name="Qing Z."/>
            <person name="Li L.-L."/>
            <person name="Kapur V."/>
            <person name="Alt D.P."/>
            <person name="Olsen S.C."/>
        </authorList>
    </citation>
    <scope>NUCLEOTIDE SEQUENCE [LARGE SCALE GENOMIC DNA]</scope>
    <source>
        <strain>9-941</strain>
    </source>
</reference>
<gene>
    <name evidence="1" type="primary">cmk</name>
    <name type="ordered locus">BruAb1_0026</name>
</gene>
<organism>
    <name type="scientific">Brucella abortus biovar 1 (strain 9-941)</name>
    <dbReference type="NCBI Taxonomy" id="262698"/>
    <lineage>
        <taxon>Bacteria</taxon>
        <taxon>Pseudomonadati</taxon>
        <taxon>Pseudomonadota</taxon>
        <taxon>Alphaproteobacteria</taxon>
        <taxon>Hyphomicrobiales</taxon>
        <taxon>Brucellaceae</taxon>
        <taxon>Brucella/Ochrobactrum group</taxon>
        <taxon>Brucella</taxon>
    </lineage>
</organism>